<keyword id="KW-0963">Cytoplasm</keyword>
<keyword id="KW-0648">Protein biosynthesis</keyword>
<keyword id="KW-1185">Reference proteome</keyword>
<reference key="1">
    <citation type="submission" date="2006-03" db="EMBL/GenBank/DDBJ databases">
        <title>Complete sequence of Shewanella denitrificans OS217.</title>
        <authorList>
            <consortium name="US DOE Joint Genome Institute"/>
            <person name="Copeland A."/>
            <person name="Lucas S."/>
            <person name="Lapidus A."/>
            <person name="Barry K."/>
            <person name="Detter J.C."/>
            <person name="Glavina del Rio T."/>
            <person name="Hammon N."/>
            <person name="Israni S."/>
            <person name="Dalin E."/>
            <person name="Tice H."/>
            <person name="Pitluck S."/>
            <person name="Brettin T."/>
            <person name="Bruce D."/>
            <person name="Han C."/>
            <person name="Tapia R."/>
            <person name="Gilna P."/>
            <person name="Kiss H."/>
            <person name="Schmutz J."/>
            <person name="Larimer F."/>
            <person name="Land M."/>
            <person name="Hauser L."/>
            <person name="Kyrpides N."/>
            <person name="Lykidis A."/>
            <person name="Richardson P."/>
        </authorList>
    </citation>
    <scope>NUCLEOTIDE SEQUENCE [LARGE SCALE GENOMIC DNA]</scope>
    <source>
        <strain>OS217 / ATCC BAA-1090 / DSM 15013</strain>
    </source>
</reference>
<proteinExistence type="inferred from homology"/>
<comment type="function">
    <text evidence="1">Responsible for the release of ribosomes from messenger RNA at the termination of protein biosynthesis. May increase the efficiency of translation by recycling ribosomes from one round of translation to another.</text>
</comment>
<comment type="subcellular location">
    <subcellularLocation>
        <location evidence="1">Cytoplasm</location>
    </subcellularLocation>
</comment>
<comment type="similarity">
    <text evidence="1">Belongs to the RRF family.</text>
</comment>
<organism>
    <name type="scientific">Shewanella denitrificans (strain OS217 / ATCC BAA-1090 / DSM 15013)</name>
    <dbReference type="NCBI Taxonomy" id="318161"/>
    <lineage>
        <taxon>Bacteria</taxon>
        <taxon>Pseudomonadati</taxon>
        <taxon>Pseudomonadota</taxon>
        <taxon>Gammaproteobacteria</taxon>
        <taxon>Alteromonadales</taxon>
        <taxon>Shewanellaceae</taxon>
        <taxon>Shewanella</taxon>
    </lineage>
</organism>
<feature type="chain" id="PRO_1000003258" description="Ribosome-recycling factor">
    <location>
        <begin position="1"/>
        <end position="185"/>
    </location>
</feature>
<sequence>MIETILLDAQERMGKCVDATKNQMAKVRTGRAHPSLLDSIQVSYYGAMSPLKQVANVGIEDSRTLSVTVFDRSMVQAVEKAIMTSDLGLNPMTAGATLRIPLPALTEERRKDFIKVVRNEAENGRIAIRNVRRDAISEVKKLEKAKECTEDDVRRSEDEVQKYTDAHIKNVDEVLTAKEKELMEV</sequence>
<name>RRF_SHEDO</name>
<accession>Q12NY4</accession>
<evidence type="ECO:0000255" key="1">
    <source>
        <dbReference type="HAMAP-Rule" id="MF_00040"/>
    </source>
</evidence>
<dbReference type="EMBL" id="CP000302">
    <property type="protein sequence ID" value="ABE54842.1"/>
    <property type="molecule type" value="Genomic_DNA"/>
</dbReference>
<dbReference type="RefSeq" id="WP_011496000.1">
    <property type="nucleotide sequence ID" value="NC_007954.1"/>
</dbReference>
<dbReference type="SMR" id="Q12NY4"/>
<dbReference type="STRING" id="318161.Sden_1557"/>
<dbReference type="KEGG" id="sdn:Sden_1557"/>
<dbReference type="eggNOG" id="COG0233">
    <property type="taxonomic scope" value="Bacteria"/>
</dbReference>
<dbReference type="HOGENOM" id="CLU_073981_2_1_6"/>
<dbReference type="OrthoDB" id="9804006at2"/>
<dbReference type="Proteomes" id="UP000001982">
    <property type="component" value="Chromosome"/>
</dbReference>
<dbReference type="GO" id="GO:0005829">
    <property type="term" value="C:cytosol"/>
    <property type="evidence" value="ECO:0007669"/>
    <property type="project" value="GOC"/>
</dbReference>
<dbReference type="GO" id="GO:0043023">
    <property type="term" value="F:ribosomal large subunit binding"/>
    <property type="evidence" value="ECO:0007669"/>
    <property type="project" value="TreeGrafter"/>
</dbReference>
<dbReference type="GO" id="GO:0002184">
    <property type="term" value="P:cytoplasmic translational termination"/>
    <property type="evidence" value="ECO:0007669"/>
    <property type="project" value="TreeGrafter"/>
</dbReference>
<dbReference type="CDD" id="cd00520">
    <property type="entry name" value="RRF"/>
    <property type="match status" value="1"/>
</dbReference>
<dbReference type="FunFam" id="1.10.132.20:FF:000001">
    <property type="entry name" value="Ribosome-recycling factor"/>
    <property type="match status" value="1"/>
</dbReference>
<dbReference type="FunFam" id="3.30.1360.40:FF:000001">
    <property type="entry name" value="Ribosome-recycling factor"/>
    <property type="match status" value="1"/>
</dbReference>
<dbReference type="Gene3D" id="3.30.1360.40">
    <property type="match status" value="1"/>
</dbReference>
<dbReference type="Gene3D" id="1.10.132.20">
    <property type="entry name" value="Ribosome-recycling factor"/>
    <property type="match status" value="1"/>
</dbReference>
<dbReference type="HAMAP" id="MF_00040">
    <property type="entry name" value="RRF"/>
    <property type="match status" value="1"/>
</dbReference>
<dbReference type="InterPro" id="IPR002661">
    <property type="entry name" value="Ribosome_recyc_fac"/>
</dbReference>
<dbReference type="InterPro" id="IPR023584">
    <property type="entry name" value="Ribosome_recyc_fac_dom"/>
</dbReference>
<dbReference type="InterPro" id="IPR036191">
    <property type="entry name" value="RRF_sf"/>
</dbReference>
<dbReference type="NCBIfam" id="TIGR00496">
    <property type="entry name" value="frr"/>
    <property type="match status" value="1"/>
</dbReference>
<dbReference type="PANTHER" id="PTHR20982:SF3">
    <property type="entry name" value="MITOCHONDRIAL RIBOSOME RECYCLING FACTOR PSEUDO 1"/>
    <property type="match status" value="1"/>
</dbReference>
<dbReference type="PANTHER" id="PTHR20982">
    <property type="entry name" value="RIBOSOME RECYCLING FACTOR"/>
    <property type="match status" value="1"/>
</dbReference>
<dbReference type="Pfam" id="PF01765">
    <property type="entry name" value="RRF"/>
    <property type="match status" value="1"/>
</dbReference>
<dbReference type="SUPFAM" id="SSF55194">
    <property type="entry name" value="Ribosome recycling factor, RRF"/>
    <property type="match status" value="1"/>
</dbReference>
<gene>
    <name evidence="1" type="primary">frr</name>
    <name type="ordered locus">Sden_1557</name>
</gene>
<protein>
    <recommendedName>
        <fullName evidence="1">Ribosome-recycling factor</fullName>
        <shortName evidence="1">RRF</shortName>
    </recommendedName>
    <alternativeName>
        <fullName evidence="1">Ribosome-releasing factor</fullName>
    </alternativeName>
</protein>